<sequence>MPAFRYLIVLPLLCWGFASQAETTPQSRLKSFLDSARTLQADFTQVRLDESGRPRQESGGSFYLQRPGKFRWDYTKPYRQQIVSSGGKVWFYDVDLEQVTAKRLGQAVGSTPALLLSGEMALEDNFTIEDQGTEEGMYWIKLVPKSEEGGFRYVLIGLEGDKLAGMELSDNFGQLTRIYFANLRTGITLDPKLFQFSPPAGVDVFEDK</sequence>
<gene>
    <name evidence="1" type="primary">lolA</name>
    <name type="ordered locus">MCA1783</name>
</gene>
<evidence type="ECO:0000255" key="1">
    <source>
        <dbReference type="HAMAP-Rule" id="MF_00240"/>
    </source>
</evidence>
<protein>
    <recommendedName>
        <fullName evidence="1">Outer-membrane lipoprotein carrier protein</fullName>
    </recommendedName>
</protein>
<dbReference type="EMBL" id="AE017282">
    <property type="protein sequence ID" value="AAU92211.1"/>
    <property type="molecule type" value="Genomic_DNA"/>
</dbReference>
<dbReference type="RefSeq" id="WP_010961036.1">
    <property type="nucleotide sequence ID" value="NC_002977.6"/>
</dbReference>
<dbReference type="SMR" id="Q607H7"/>
<dbReference type="STRING" id="243233.MCA1783"/>
<dbReference type="GeneID" id="88225337"/>
<dbReference type="KEGG" id="mca:MCA1783"/>
<dbReference type="eggNOG" id="COG2834">
    <property type="taxonomic scope" value="Bacteria"/>
</dbReference>
<dbReference type="HOGENOM" id="CLU_087560_0_0_6"/>
<dbReference type="Proteomes" id="UP000006821">
    <property type="component" value="Chromosome"/>
</dbReference>
<dbReference type="GO" id="GO:0042597">
    <property type="term" value="C:periplasmic space"/>
    <property type="evidence" value="ECO:0007669"/>
    <property type="project" value="UniProtKB-SubCell"/>
</dbReference>
<dbReference type="GO" id="GO:0044874">
    <property type="term" value="P:lipoprotein localization to outer membrane"/>
    <property type="evidence" value="ECO:0007669"/>
    <property type="project" value="UniProtKB-UniRule"/>
</dbReference>
<dbReference type="GO" id="GO:0042953">
    <property type="term" value="P:lipoprotein transport"/>
    <property type="evidence" value="ECO:0007669"/>
    <property type="project" value="InterPro"/>
</dbReference>
<dbReference type="CDD" id="cd16325">
    <property type="entry name" value="LolA"/>
    <property type="match status" value="1"/>
</dbReference>
<dbReference type="Gene3D" id="2.50.20.10">
    <property type="entry name" value="Lipoprotein localisation LolA/LolB/LppX"/>
    <property type="match status" value="1"/>
</dbReference>
<dbReference type="HAMAP" id="MF_00240">
    <property type="entry name" value="LolA"/>
    <property type="match status" value="1"/>
</dbReference>
<dbReference type="InterPro" id="IPR029046">
    <property type="entry name" value="LolA/LolB/LppX"/>
</dbReference>
<dbReference type="InterPro" id="IPR004564">
    <property type="entry name" value="OM_lipoprot_carrier_LolA-like"/>
</dbReference>
<dbReference type="InterPro" id="IPR018323">
    <property type="entry name" value="OM_lipoprot_carrier_LolA_Pbac"/>
</dbReference>
<dbReference type="NCBIfam" id="TIGR00547">
    <property type="entry name" value="lolA"/>
    <property type="match status" value="1"/>
</dbReference>
<dbReference type="PANTHER" id="PTHR35869">
    <property type="entry name" value="OUTER-MEMBRANE LIPOPROTEIN CARRIER PROTEIN"/>
    <property type="match status" value="1"/>
</dbReference>
<dbReference type="PANTHER" id="PTHR35869:SF1">
    <property type="entry name" value="OUTER-MEMBRANE LIPOPROTEIN CARRIER PROTEIN"/>
    <property type="match status" value="1"/>
</dbReference>
<dbReference type="Pfam" id="PF03548">
    <property type="entry name" value="LolA"/>
    <property type="match status" value="1"/>
</dbReference>
<dbReference type="SUPFAM" id="SSF89392">
    <property type="entry name" value="Prokaryotic lipoproteins and lipoprotein localization factors"/>
    <property type="match status" value="1"/>
</dbReference>
<keyword id="KW-0143">Chaperone</keyword>
<keyword id="KW-0574">Periplasm</keyword>
<keyword id="KW-0653">Protein transport</keyword>
<keyword id="KW-1185">Reference proteome</keyword>
<keyword id="KW-0732">Signal</keyword>
<keyword id="KW-0813">Transport</keyword>
<accession>Q607H7</accession>
<name>LOLA_METCA</name>
<comment type="function">
    <text evidence="1">Participates in the translocation of lipoproteins from the inner membrane to the outer membrane. Only forms a complex with a lipoprotein if the residue after the N-terminal Cys is not an aspartate (The Asp acts as a targeting signal to indicate that the lipoprotein should stay in the inner membrane).</text>
</comment>
<comment type="subunit">
    <text evidence="1">Monomer.</text>
</comment>
<comment type="subcellular location">
    <subcellularLocation>
        <location evidence="1">Periplasm</location>
    </subcellularLocation>
</comment>
<comment type="similarity">
    <text evidence="1">Belongs to the LolA family.</text>
</comment>
<feature type="signal peptide" evidence="1">
    <location>
        <begin position="1"/>
        <end position="21"/>
    </location>
</feature>
<feature type="chain" id="PRO_0000336655" description="Outer-membrane lipoprotein carrier protein">
    <location>
        <begin position="22"/>
        <end position="208"/>
    </location>
</feature>
<organism>
    <name type="scientific">Methylococcus capsulatus (strain ATCC 33009 / NCIMB 11132 / Bath)</name>
    <dbReference type="NCBI Taxonomy" id="243233"/>
    <lineage>
        <taxon>Bacteria</taxon>
        <taxon>Pseudomonadati</taxon>
        <taxon>Pseudomonadota</taxon>
        <taxon>Gammaproteobacteria</taxon>
        <taxon>Methylococcales</taxon>
        <taxon>Methylococcaceae</taxon>
        <taxon>Methylococcus</taxon>
    </lineage>
</organism>
<proteinExistence type="inferred from homology"/>
<reference key="1">
    <citation type="journal article" date="2004" name="PLoS Biol.">
        <title>Genomic insights into methanotrophy: the complete genome sequence of Methylococcus capsulatus (Bath).</title>
        <authorList>
            <person name="Ward N.L."/>
            <person name="Larsen O."/>
            <person name="Sakwa J."/>
            <person name="Bruseth L."/>
            <person name="Khouri H.M."/>
            <person name="Durkin A.S."/>
            <person name="Dimitrov G."/>
            <person name="Jiang L."/>
            <person name="Scanlan D."/>
            <person name="Kang K.H."/>
            <person name="Lewis M.R."/>
            <person name="Nelson K.E."/>
            <person name="Methe B.A."/>
            <person name="Wu M."/>
            <person name="Heidelberg J.F."/>
            <person name="Paulsen I.T."/>
            <person name="Fouts D.E."/>
            <person name="Ravel J."/>
            <person name="Tettelin H."/>
            <person name="Ren Q."/>
            <person name="Read T.D."/>
            <person name="DeBoy R.T."/>
            <person name="Seshadri R."/>
            <person name="Salzberg S.L."/>
            <person name="Jensen H.B."/>
            <person name="Birkeland N.K."/>
            <person name="Nelson W.C."/>
            <person name="Dodson R.J."/>
            <person name="Grindhaug S.H."/>
            <person name="Holt I.E."/>
            <person name="Eidhammer I."/>
            <person name="Jonasen I."/>
            <person name="Vanaken S."/>
            <person name="Utterback T.R."/>
            <person name="Feldblyum T.V."/>
            <person name="Fraser C.M."/>
            <person name="Lillehaug J.R."/>
            <person name="Eisen J.A."/>
        </authorList>
    </citation>
    <scope>NUCLEOTIDE SEQUENCE [LARGE SCALE GENOMIC DNA]</scope>
    <source>
        <strain>ATCC 33009 / NCIMB 11132 / Bath</strain>
    </source>
</reference>